<feature type="chain" id="PRO_0000347798" description="Alanine--tRNA ligase">
    <location>
        <begin position="1"/>
        <end position="876"/>
    </location>
</feature>
<feature type="binding site" evidence="1">
    <location>
        <position position="564"/>
    </location>
    <ligand>
        <name>Zn(2+)</name>
        <dbReference type="ChEBI" id="CHEBI:29105"/>
    </ligand>
</feature>
<feature type="binding site" evidence="1">
    <location>
        <position position="568"/>
    </location>
    <ligand>
        <name>Zn(2+)</name>
        <dbReference type="ChEBI" id="CHEBI:29105"/>
    </ligand>
</feature>
<feature type="binding site" evidence="1">
    <location>
        <position position="666"/>
    </location>
    <ligand>
        <name>Zn(2+)</name>
        <dbReference type="ChEBI" id="CHEBI:29105"/>
    </ligand>
</feature>
<feature type="binding site" evidence="1">
    <location>
        <position position="670"/>
    </location>
    <ligand>
        <name>Zn(2+)</name>
        <dbReference type="ChEBI" id="CHEBI:29105"/>
    </ligand>
</feature>
<feature type="modified residue" description="N6-acetyllysine" evidence="1">
    <location>
        <position position="74"/>
    </location>
</feature>
<dbReference type="EC" id="6.1.1.7" evidence="1"/>
<dbReference type="EMBL" id="CP000034">
    <property type="protein sequence ID" value="ABB62924.1"/>
    <property type="molecule type" value="Genomic_DNA"/>
</dbReference>
<dbReference type="RefSeq" id="WP_000047160.1">
    <property type="nucleotide sequence ID" value="NC_007606.1"/>
</dbReference>
<dbReference type="RefSeq" id="YP_404415.1">
    <property type="nucleotide sequence ID" value="NC_007606.1"/>
</dbReference>
<dbReference type="SMR" id="Q32CN1"/>
<dbReference type="STRING" id="300267.SDY_2893"/>
<dbReference type="EnsemblBacteria" id="ABB62924">
    <property type="protein sequence ID" value="ABB62924"/>
    <property type="gene ID" value="SDY_2893"/>
</dbReference>
<dbReference type="KEGG" id="sdy:SDY_2893"/>
<dbReference type="PATRIC" id="fig|300267.13.peg.3474"/>
<dbReference type="HOGENOM" id="CLU_004485_1_1_6"/>
<dbReference type="Proteomes" id="UP000002716">
    <property type="component" value="Chromosome"/>
</dbReference>
<dbReference type="GO" id="GO:0005829">
    <property type="term" value="C:cytosol"/>
    <property type="evidence" value="ECO:0007669"/>
    <property type="project" value="TreeGrafter"/>
</dbReference>
<dbReference type="GO" id="GO:0004813">
    <property type="term" value="F:alanine-tRNA ligase activity"/>
    <property type="evidence" value="ECO:0007669"/>
    <property type="project" value="UniProtKB-UniRule"/>
</dbReference>
<dbReference type="GO" id="GO:0002161">
    <property type="term" value="F:aminoacyl-tRNA deacylase activity"/>
    <property type="evidence" value="ECO:0007669"/>
    <property type="project" value="TreeGrafter"/>
</dbReference>
<dbReference type="GO" id="GO:0005524">
    <property type="term" value="F:ATP binding"/>
    <property type="evidence" value="ECO:0007669"/>
    <property type="project" value="UniProtKB-UniRule"/>
</dbReference>
<dbReference type="GO" id="GO:0000049">
    <property type="term" value="F:tRNA binding"/>
    <property type="evidence" value="ECO:0007669"/>
    <property type="project" value="UniProtKB-KW"/>
</dbReference>
<dbReference type="GO" id="GO:0008270">
    <property type="term" value="F:zinc ion binding"/>
    <property type="evidence" value="ECO:0007669"/>
    <property type="project" value="UniProtKB-UniRule"/>
</dbReference>
<dbReference type="GO" id="GO:0006419">
    <property type="term" value="P:alanyl-tRNA aminoacylation"/>
    <property type="evidence" value="ECO:0007669"/>
    <property type="project" value="UniProtKB-UniRule"/>
</dbReference>
<dbReference type="GO" id="GO:0045892">
    <property type="term" value="P:negative regulation of DNA-templated transcription"/>
    <property type="evidence" value="ECO:0007669"/>
    <property type="project" value="TreeGrafter"/>
</dbReference>
<dbReference type="CDD" id="cd00673">
    <property type="entry name" value="AlaRS_core"/>
    <property type="match status" value="1"/>
</dbReference>
<dbReference type="FunFam" id="2.40.30.130:FF:000001">
    <property type="entry name" value="Alanine--tRNA ligase"/>
    <property type="match status" value="1"/>
</dbReference>
<dbReference type="FunFam" id="3.10.310.40:FF:000001">
    <property type="entry name" value="Alanine--tRNA ligase"/>
    <property type="match status" value="1"/>
</dbReference>
<dbReference type="FunFam" id="3.30.54.20:FF:000001">
    <property type="entry name" value="Alanine--tRNA ligase"/>
    <property type="match status" value="1"/>
</dbReference>
<dbReference type="FunFam" id="3.30.930.10:FF:000004">
    <property type="entry name" value="Alanine--tRNA ligase"/>
    <property type="match status" value="1"/>
</dbReference>
<dbReference type="FunFam" id="3.30.980.10:FF:000004">
    <property type="entry name" value="Alanine--tRNA ligase, cytoplasmic"/>
    <property type="match status" value="1"/>
</dbReference>
<dbReference type="Gene3D" id="2.40.30.130">
    <property type="match status" value="1"/>
</dbReference>
<dbReference type="Gene3D" id="3.10.310.40">
    <property type="match status" value="1"/>
</dbReference>
<dbReference type="Gene3D" id="3.30.54.20">
    <property type="match status" value="1"/>
</dbReference>
<dbReference type="Gene3D" id="6.10.250.550">
    <property type="match status" value="1"/>
</dbReference>
<dbReference type="Gene3D" id="3.30.930.10">
    <property type="entry name" value="Bira Bifunctional Protein, Domain 2"/>
    <property type="match status" value="1"/>
</dbReference>
<dbReference type="Gene3D" id="3.30.980.10">
    <property type="entry name" value="Threonyl-trna Synthetase, Chain A, domain 2"/>
    <property type="match status" value="1"/>
</dbReference>
<dbReference type="HAMAP" id="MF_00036_B">
    <property type="entry name" value="Ala_tRNA_synth_B"/>
    <property type="match status" value="1"/>
</dbReference>
<dbReference type="InterPro" id="IPR045864">
    <property type="entry name" value="aa-tRNA-synth_II/BPL/LPL"/>
</dbReference>
<dbReference type="InterPro" id="IPR002318">
    <property type="entry name" value="Ala-tRNA-lgiase_IIc"/>
</dbReference>
<dbReference type="InterPro" id="IPR018162">
    <property type="entry name" value="Ala-tRNA-ligase_IIc_anticod-bd"/>
</dbReference>
<dbReference type="InterPro" id="IPR018165">
    <property type="entry name" value="Ala-tRNA-synth_IIc_core"/>
</dbReference>
<dbReference type="InterPro" id="IPR018164">
    <property type="entry name" value="Ala-tRNA-synth_IIc_N"/>
</dbReference>
<dbReference type="InterPro" id="IPR050058">
    <property type="entry name" value="Ala-tRNA_ligase"/>
</dbReference>
<dbReference type="InterPro" id="IPR023033">
    <property type="entry name" value="Ala_tRNA_ligase_euk/bac"/>
</dbReference>
<dbReference type="InterPro" id="IPR003156">
    <property type="entry name" value="DHHA1_dom"/>
</dbReference>
<dbReference type="InterPro" id="IPR018163">
    <property type="entry name" value="Thr/Ala-tRNA-synth_IIc_edit"/>
</dbReference>
<dbReference type="InterPro" id="IPR009000">
    <property type="entry name" value="Transl_B-barrel_sf"/>
</dbReference>
<dbReference type="InterPro" id="IPR012947">
    <property type="entry name" value="tRNA_SAD"/>
</dbReference>
<dbReference type="NCBIfam" id="TIGR00344">
    <property type="entry name" value="alaS"/>
    <property type="match status" value="1"/>
</dbReference>
<dbReference type="PANTHER" id="PTHR11777:SF9">
    <property type="entry name" value="ALANINE--TRNA LIGASE, CYTOPLASMIC"/>
    <property type="match status" value="1"/>
</dbReference>
<dbReference type="PANTHER" id="PTHR11777">
    <property type="entry name" value="ALANYL-TRNA SYNTHETASE"/>
    <property type="match status" value="1"/>
</dbReference>
<dbReference type="Pfam" id="PF02272">
    <property type="entry name" value="DHHA1"/>
    <property type="match status" value="1"/>
</dbReference>
<dbReference type="Pfam" id="PF01411">
    <property type="entry name" value="tRNA-synt_2c"/>
    <property type="match status" value="1"/>
</dbReference>
<dbReference type="Pfam" id="PF07973">
    <property type="entry name" value="tRNA_SAD"/>
    <property type="match status" value="1"/>
</dbReference>
<dbReference type="PRINTS" id="PR00980">
    <property type="entry name" value="TRNASYNTHALA"/>
</dbReference>
<dbReference type="SMART" id="SM00863">
    <property type="entry name" value="tRNA_SAD"/>
    <property type="match status" value="1"/>
</dbReference>
<dbReference type="SUPFAM" id="SSF55681">
    <property type="entry name" value="Class II aaRS and biotin synthetases"/>
    <property type="match status" value="1"/>
</dbReference>
<dbReference type="SUPFAM" id="SSF101353">
    <property type="entry name" value="Putative anticodon-binding domain of alanyl-tRNA synthetase (AlaRS)"/>
    <property type="match status" value="1"/>
</dbReference>
<dbReference type="SUPFAM" id="SSF55186">
    <property type="entry name" value="ThrRS/AlaRS common domain"/>
    <property type="match status" value="1"/>
</dbReference>
<dbReference type="SUPFAM" id="SSF50447">
    <property type="entry name" value="Translation proteins"/>
    <property type="match status" value="1"/>
</dbReference>
<dbReference type="PROSITE" id="PS50860">
    <property type="entry name" value="AA_TRNA_LIGASE_II_ALA"/>
    <property type="match status" value="1"/>
</dbReference>
<gene>
    <name evidence="1" type="primary">alaS</name>
    <name type="ordered locus">SDY_2893</name>
</gene>
<sequence length="876" mass="95988">MSKSTAEIRQAFLDFFHSKGHQVVASSSLVPHNDPTLLFTNAGMNQFKDVFLGLDKRNYSRATTSQRCVRAGGKHNDLENVGYTARHHTFFEMLGNFSFGDYFKHDAIQFAWELLTSEKWFALPKERLWVTVYESDDEAYEIWEKEVGIPRERIIRIGDNKGAPYASDNFWQMGDTGPCGPCTEIFYDHGDHIWGGPPGSPEEDGDRYIEIWNIVFMQFNRQADGTMEPLPKPSVDTGMGLERIAAVLQHVNSNYDIDLFRTLIQAVAKVTGATDLSNKSLRVIADHIRSCAFLIADGVMPSNENRGYVLRRIIRRAVRHGNMLGAKETFFYKLVGPLIDVMGSAGEDLKRQQAQVEQVLKTEEEQFARTLERGLALLDEELAKLSGDTLDGETAFRLYDTYGFPVDLTADVCRERNIKVDEAGFEAAMEEQRRRAREASGFGADYNAMIRVDSASEFKGYDHLELNGKVTALFVDGKAVDAINAGQDAVVVLDQTPFYAESGGQVGDKGELKGANFSFVVEDTQKYGQAIGHIGKLAAGSLKVGDAVQADVDEARRARIRLNHSATHLMHAALRQVLGTHVSQKGSLVNDKVLRFDFSHNEAMKPEEIRAVEDLVNAQIRRNLPIETNIMDLEAAKAKGAMALFGEKYDERVRVLSMGDFSTELCGGTHASRTGDIGLFRIISESGTAAGVRRIEAVTGEGAIATVHADSDRLSEVAHLLKGDSNNLADKVRSVLERTRQLEKELQQLKEQAAAQESANLSSKAIDVNGVKLLVSELSGVEPKMLRTMVDDLKNQLGSTIIVLATVAEGKVSLIAGVSKDVTDRVKAGELIGMVAQQVGGKGGGRPDMAQAGGTDAAALPAALASVKGWVSAKLQ</sequence>
<keyword id="KW-0007">Acetylation</keyword>
<keyword id="KW-0030">Aminoacyl-tRNA synthetase</keyword>
<keyword id="KW-0067">ATP-binding</keyword>
<keyword id="KW-0963">Cytoplasm</keyword>
<keyword id="KW-0436">Ligase</keyword>
<keyword id="KW-0479">Metal-binding</keyword>
<keyword id="KW-0547">Nucleotide-binding</keyword>
<keyword id="KW-0648">Protein biosynthesis</keyword>
<keyword id="KW-1185">Reference proteome</keyword>
<keyword id="KW-0694">RNA-binding</keyword>
<keyword id="KW-0820">tRNA-binding</keyword>
<keyword id="KW-0862">Zinc</keyword>
<name>SYA_SHIDS</name>
<protein>
    <recommendedName>
        <fullName evidence="1">Alanine--tRNA ligase</fullName>
        <ecNumber evidence="1">6.1.1.7</ecNumber>
    </recommendedName>
    <alternativeName>
        <fullName evidence="1">Alanyl-tRNA synthetase</fullName>
        <shortName evidence="1">AlaRS</shortName>
    </alternativeName>
</protein>
<accession>Q32CN1</accession>
<evidence type="ECO:0000255" key="1">
    <source>
        <dbReference type="HAMAP-Rule" id="MF_00036"/>
    </source>
</evidence>
<comment type="function">
    <text evidence="1">Catalyzes the attachment of alanine to tRNA(Ala) in a two-step reaction: alanine is first activated by ATP to form Ala-AMP and then transferred to the acceptor end of tRNA(Ala). Also edits incorrectly charged Ser-tRNA(Ala) and Gly-tRNA(Ala) via its editing domain.</text>
</comment>
<comment type="catalytic activity">
    <reaction evidence="1">
        <text>tRNA(Ala) + L-alanine + ATP = L-alanyl-tRNA(Ala) + AMP + diphosphate</text>
        <dbReference type="Rhea" id="RHEA:12540"/>
        <dbReference type="Rhea" id="RHEA-COMP:9657"/>
        <dbReference type="Rhea" id="RHEA-COMP:9923"/>
        <dbReference type="ChEBI" id="CHEBI:30616"/>
        <dbReference type="ChEBI" id="CHEBI:33019"/>
        <dbReference type="ChEBI" id="CHEBI:57972"/>
        <dbReference type="ChEBI" id="CHEBI:78442"/>
        <dbReference type="ChEBI" id="CHEBI:78497"/>
        <dbReference type="ChEBI" id="CHEBI:456215"/>
        <dbReference type="EC" id="6.1.1.7"/>
    </reaction>
</comment>
<comment type="cofactor">
    <cofactor evidence="1">
        <name>Zn(2+)</name>
        <dbReference type="ChEBI" id="CHEBI:29105"/>
    </cofactor>
    <text evidence="1">Binds 1 zinc ion per subunit.</text>
</comment>
<comment type="subunit">
    <text evidence="1">Homotetramer.</text>
</comment>
<comment type="subcellular location">
    <subcellularLocation>
        <location evidence="1">Cytoplasm</location>
    </subcellularLocation>
</comment>
<comment type="domain">
    <text evidence="1">Consists of three domains; the N-terminal catalytic domain, the editing domain and the C-terminal C-Ala domain. The editing domain removes incorrectly charged amino acids, while the C-Ala domain, along with tRNA(Ala), serves as a bridge to cooperatively bring together the editing and aminoacylation centers thus stimulating deacylation of misacylated tRNAs.</text>
</comment>
<comment type="similarity">
    <text evidence="1">Belongs to the class-II aminoacyl-tRNA synthetase family.</text>
</comment>
<organism>
    <name type="scientific">Shigella dysenteriae serotype 1 (strain Sd197)</name>
    <dbReference type="NCBI Taxonomy" id="300267"/>
    <lineage>
        <taxon>Bacteria</taxon>
        <taxon>Pseudomonadati</taxon>
        <taxon>Pseudomonadota</taxon>
        <taxon>Gammaproteobacteria</taxon>
        <taxon>Enterobacterales</taxon>
        <taxon>Enterobacteriaceae</taxon>
        <taxon>Shigella</taxon>
    </lineage>
</organism>
<reference key="1">
    <citation type="journal article" date="2005" name="Nucleic Acids Res.">
        <title>Genome dynamics and diversity of Shigella species, the etiologic agents of bacillary dysentery.</title>
        <authorList>
            <person name="Yang F."/>
            <person name="Yang J."/>
            <person name="Zhang X."/>
            <person name="Chen L."/>
            <person name="Jiang Y."/>
            <person name="Yan Y."/>
            <person name="Tang X."/>
            <person name="Wang J."/>
            <person name="Xiong Z."/>
            <person name="Dong J."/>
            <person name="Xue Y."/>
            <person name="Zhu Y."/>
            <person name="Xu X."/>
            <person name="Sun L."/>
            <person name="Chen S."/>
            <person name="Nie H."/>
            <person name="Peng J."/>
            <person name="Xu J."/>
            <person name="Wang Y."/>
            <person name="Yuan Z."/>
            <person name="Wen Y."/>
            <person name="Yao Z."/>
            <person name="Shen Y."/>
            <person name="Qiang B."/>
            <person name="Hou Y."/>
            <person name="Yu J."/>
            <person name="Jin Q."/>
        </authorList>
    </citation>
    <scope>NUCLEOTIDE SEQUENCE [LARGE SCALE GENOMIC DNA]</scope>
    <source>
        <strain>Sd197</strain>
    </source>
</reference>
<proteinExistence type="inferred from homology"/>